<proteinExistence type="inferred from homology"/>
<reference key="1">
    <citation type="journal article" date="2008" name="Appl. Environ. Microbiol.">
        <title>Genome of the epsilonproteobacterial chemolithoautotroph Sulfurimonas denitrificans.</title>
        <authorList>
            <person name="Sievert S.M."/>
            <person name="Scott K.M."/>
            <person name="Klotz M.G."/>
            <person name="Chain P.S.G."/>
            <person name="Hauser L.J."/>
            <person name="Hemp J."/>
            <person name="Huegler M."/>
            <person name="Land M."/>
            <person name="Lapidus A."/>
            <person name="Larimer F.W."/>
            <person name="Lucas S."/>
            <person name="Malfatti S.A."/>
            <person name="Meyer F."/>
            <person name="Paulsen I.T."/>
            <person name="Ren Q."/>
            <person name="Simon J."/>
            <person name="Bailey K."/>
            <person name="Diaz E."/>
            <person name="Fitzpatrick K.A."/>
            <person name="Glover B."/>
            <person name="Gwatney N."/>
            <person name="Korajkic A."/>
            <person name="Long A."/>
            <person name="Mobberley J.M."/>
            <person name="Pantry S.N."/>
            <person name="Pazder G."/>
            <person name="Peterson S."/>
            <person name="Quintanilla J.D."/>
            <person name="Sprinkle R."/>
            <person name="Stephens J."/>
            <person name="Thomas P."/>
            <person name="Vaughn R."/>
            <person name="Weber M.J."/>
            <person name="Wooten L.L."/>
        </authorList>
    </citation>
    <scope>NUCLEOTIDE SEQUENCE [LARGE SCALE GENOMIC DNA]</scope>
    <source>
        <strain>ATCC 33889 / DSM 1251</strain>
    </source>
</reference>
<comment type="function">
    <text evidence="1">Probably deamidates glutamine residues to glutamate on methyl-accepting chemotaxis receptors (MCPs), playing an important role in chemotaxis.</text>
</comment>
<comment type="catalytic activity">
    <reaction evidence="1">
        <text>L-glutaminyl-[protein] + H2O = L-glutamyl-[protein] + NH4(+)</text>
        <dbReference type="Rhea" id="RHEA:16441"/>
        <dbReference type="Rhea" id="RHEA-COMP:10207"/>
        <dbReference type="Rhea" id="RHEA-COMP:10208"/>
        <dbReference type="ChEBI" id="CHEBI:15377"/>
        <dbReference type="ChEBI" id="CHEBI:28938"/>
        <dbReference type="ChEBI" id="CHEBI:29973"/>
        <dbReference type="ChEBI" id="CHEBI:30011"/>
        <dbReference type="EC" id="3.5.1.44"/>
    </reaction>
</comment>
<comment type="similarity">
    <text evidence="1">Belongs to the CheD family.</text>
</comment>
<sequence>MEYEKKYIHSSQLFVAVRPSVIQTVLGSCVAVCLYDSKMQISGMNHYLLPLWNNDGLASPKYGNIAISKLIEAMEAVGCQRRDMVAKLFGGASPNNFNAQNGMLVGEKNIQIAHHILSEQRIKIVASDLGGTRGRKISLESNSGRVMLKYVQKTEF</sequence>
<keyword id="KW-0145">Chemotaxis</keyword>
<keyword id="KW-0378">Hydrolase</keyword>
<keyword id="KW-1185">Reference proteome</keyword>
<organism>
    <name type="scientific">Sulfurimonas denitrificans (strain ATCC 33889 / DSM 1251)</name>
    <name type="common">Thiomicrospira denitrificans (strain ATCC 33889 / DSM 1251)</name>
    <dbReference type="NCBI Taxonomy" id="326298"/>
    <lineage>
        <taxon>Bacteria</taxon>
        <taxon>Pseudomonadati</taxon>
        <taxon>Campylobacterota</taxon>
        <taxon>Epsilonproteobacteria</taxon>
        <taxon>Campylobacterales</taxon>
        <taxon>Sulfurimonadaceae</taxon>
        <taxon>Sulfurimonas</taxon>
    </lineage>
</organism>
<accession>Q30RX6</accession>
<dbReference type="EC" id="3.5.1.44" evidence="1"/>
<dbReference type="EMBL" id="CP000153">
    <property type="protein sequence ID" value="ABB44255.1"/>
    <property type="molecule type" value="Genomic_DNA"/>
</dbReference>
<dbReference type="RefSeq" id="WP_011372607.1">
    <property type="nucleotide sequence ID" value="NC_007575.1"/>
</dbReference>
<dbReference type="SMR" id="Q30RX6"/>
<dbReference type="STRING" id="326298.Suden_0977"/>
<dbReference type="KEGG" id="tdn:Suden_0977"/>
<dbReference type="eggNOG" id="COG1871">
    <property type="taxonomic scope" value="Bacteria"/>
</dbReference>
<dbReference type="HOGENOM" id="CLU_087854_1_2_7"/>
<dbReference type="OrthoDB" id="9807202at2"/>
<dbReference type="Proteomes" id="UP000002714">
    <property type="component" value="Chromosome"/>
</dbReference>
<dbReference type="GO" id="GO:0050568">
    <property type="term" value="F:protein-glutamine glutaminase activity"/>
    <property type="evidence" value="ECO:0007669"/>
    <property type="project" value="UniProtKB-UniRule"/>
</dbReference>
<dbReference type="GO" id="GO:0006935">
    <property type="term" value="P:chemotaxis"/>
    <property type="evidence" value="ECO:0007669"/>
    <property type="project" value="UniProtKB-UniRule"/>
</dbReference>
<dbReference type="CDD" id="cd16352">
    <property type="entry name" value="CheD"/>
    <property type="match status" value="1"/>
</dbReference>
<dbReference type="Gene3D" id="3.30.1330.200">
    <property type="match status" value="1"/>
</dbReference>
<dbReference type="HAMAP" id="MF_01440">
    <property type="entry name" value="CheD"/>
    <property type="match status" value="1"/>
</dbReference>
<dbReference type="InterPro" id="IPR038592">
    <property type="entry name" value="CheD-like_sf"/>
</dbReference>
<dbReference type="InterPro" id="IPR005659">
    <property type="entry name" value="Chemorcpt_Glu_NH3ase_CheD"/>
</dbReference>
<dbReference type="InterPro" id="IPR011324">
    <property type="entry name" value="Cytotoxic_necrot_fac-like_cat"/>
</dbReference>
<dbReference type="PANTHER" id="PTHR35147">
    <property type="entry name" value="CHEMORECEPTOR GLUTAMINE DEAMIDASE CHED-RELATED"/>
    <property type="match status" value="1"/>
</dbReference>
<dbReference type="PANTHER" id="PTHR35147:SF1">
    <property type="entry name" value="CHEMORECEPTOR GLUTAMINE DEAMIDASE CHED-RELATED"/>
    <property type="match status" value="1"/>
</dbReference>
<dbReference type="Pfam" id="PF03975">
    <property type="entry name" value="CheD"/>
    <property type="match status" value="1"/>
</dbReference>
<dbReference type="SUPFAM" id="SSF64438">
    <property type="entry name" value="CNF1/YfiH-like putative cysteine hydrolases"/>
    <property type="match status" value="1"/>
</dbReference>
<evidence type="ECO:0000255" key="1">
    <source>
        <dbReference type="HAMAP-Rule" id="MF_01440"/>
    </source>
</evidence>
<gene>
    <name evidence="1" type="primary">cheD</name>
    <name type="ordered locus">Suden_0977</name>
</gene>
<name>CHED_SULDN</name>
<protein>
    <recommendedName>
        <fullName evidence="1">Probable chemoreceptor glutamine deamidase CheD</fullName>
        <ecNumber evidence="1">3.5.1.44</ecNumber>
    </recommendedName>
</protein>
<feature type="chain" id="PRO_0000251075" description="Probable chemoreceptor glutamine deamidase CheD">
    <location>
        <begin position="1"/>
        <end position="156"/>
    </location>
</feature>